<feature type="chain" id="PRO_0000309368" description="UPF0502 protein AHA_2872">
    <location>
        <begin position="1"/>
        <end position="217"/>
    </location>
</feature>
<sequence length="217" mass="24071">MELVLGPLEARVIGCLIEKEICTPDQYPLSLNALVNACNQKSNREPVLELSELDIRAVVDELIRKRLVVNTAGFNARVPRYQHRFCNTEFGELKFTAQELGIICELLLRGPQTPGELRSRTNRLCSFDDVTQVDAVLAKLAEQGPYVVKLPREPGKRESRYAHLFSGEVDLQALAEAAPASSYASPAADRLTALEEEVESLKAQLQLLAERLAQLEG</sequence>
<name>Y2872_AERHH</name>
<proteinExistence type="inferred from homology"/>
<dbReference type="EMBL" id="CP000462">
    <property type="protein sequence ID" value="ABK38794.1"/>
    <property type="molecule type" value="Genomic_DNA"/>
</dbReference>
<dbReference type="RefSeq" id="WP_011706673.1">
    <property type="nucleotide sequence ID" value="NC_008570.1"/>
</dbReference>
<dbReference type="RefSeq" id="YP_857376.1">
    <property type="nucleotide sequence ID" value="NC_008570.1"/>
</dbReference>
<dbReference type="SMR" id="A0KM75"/>
<dbReference type="STRING" id="380703.AHA_2872"/>
<dbReference type="EnsemblBacteria" id="ABK38794">
    <property type="protein sequence ID" value="ABK38794"/>
    <property type="gene ID" value="AHA_2872"/>
</dbReference>
<dbReference type="GeneID" id="4488675"/>
<dbReference type="KEGG" id="aha:AHA_2872"/>
<dbReference type="PATRIC" id="fig|380703.7.peg.2882"/>
<dbReference type="eggNOG" id="COG3132">
    <property type="taxonomic scope" value="Bacteria"/>
</dbReference>
<dbReference type="HOGENOM" id="CLU_057831_2_0_6"/>
<dbReference type="OrthoDB" id="9784785at2"/>
<dbReference type="Proteomes" id="UP000000756">
    <property type="component" value="Chromosome"/>
</dbReference>
<dbReference type="Gene3D" id="1.10.10.10">
    <property type="entry name" value="Winged helix-like DNA-binding domain superfamily/Winged helix DNA-binding domain"/>
    <property type="match status" value="2"/>
</dbReference>
<dbReference type="HAMAP" id="MF_01584">
    <property type="entry name" value="UPF0502"/>
    <property type="match status" value="1"/>
</dbReference>
<dbReference type="InterPro" id="IPR007432">
    <property type="entry name" value="DUF480"/>
</dbReference>
<dbReference type="InterPro" id="IPR036388">
    <property type="entry name" value="WH-like_DNA-bd_sf"/>
</dbReference>
<dbReference type="InterPro" id="IPR036390">
    <property type="entry name" value="WH_DNA-bd_sf"/>
</dbReference>
<dbReference type="PANTHER" id="PTHR38768">
    <property type="entry name" value="UPF0502 PROTEIN YCEH"/>
    <property type="match status" value="1"/>
</dbReference>
<dbReference type="PANTHER" id="PTHR38768:SF1">
    <property type="entry name" value="UPF0502 PROTEIN YCEH"/>
    <property type="match status" value="1"/>
</dbReference>
<dbReference type="Pfam" id="PF04337">
    <property type="entry name" value="DUF480"/>
    <property type="match status" value="1"/>
</dbReference>
<dbReference type="SUPFAM" id="SSF46785">
    <property type="entry name" value="Winged helix' DNA-binding domain"/>
    <property type="match status" value="2"/>
</dbReference>
<reference key="1">
    <citation type="journal article" date="2006" name="J. Bacteriol.">
        <title>Genome sequence of Aeromonas hydrophila ATCC 7966T: jack of all trades.</title>
        <authorList>
            <person name="Seshadri R."/>
            <person name="Joseph S.W."/>
            <person name="Chopra A.K."/>
            <person name="Sha J."/>
            <person name="Shaw J."/>
            <person name="Graf J."/>
            <person name="Haft D.H."/>
            <person name="Wu M."/>
            <person name="Ren Q."/>
            <person name="Rosovitz M.J."/>
            <person name="Madupu R."/>
            <person name="Tallon L."/>
            <person name="Kim M."/>
            <person name="Jin S."/>
            <person name="Vuong H."/>
            <person name="Stine O.C."/>
            <person name="Ali A."/>
            <person name="Horneman A.J."/>
            <person name="Heidelberg J.F."/>
        </authorList>
    </citation>
    <scope>NUCLEOTIDE SEQUENCE [LARGE SCALE GENOMIC DNA]</scope>
    <source>
        <strain>ATCC 7966 / DSM 30187 / BCRC 13018 / CCUG 14551 / JCM 1027 / KCTC 2358 / NCIMB 9240 / NCTC 8049</strain>
    </source>
</reference>
<comment type="similarity">
    <text evidence="1">Belongs to the UPF0502 family.</text>
</comment>
<protein>
    <recommendedName>
        <fullName evidence="1">UPF0502 protein AHA_2872</fullName>
    </recommendedName>
</protein>
<keyword id="KW-1185">Reference proteome</keyword>
<evidence type="ECO:0000255" key="1">
    <source>
        <dbReference type="HAMAP-Rule" id="MF_01584"/>
    </source>
</evidence>
<accession>A0KM75</accession>
<organism>
    <name type="scientific">Aeromonas hydrophila subsp. hydrophila (strain ATCC 7966 / DSM 30187 / BCRC 13018 / CCUG 14551 / JCM 1027 / KCTC 2358 / NCIMB 9240 / NCTC 8049)</name>
    <dbReference type="NCBI Taxonomy" id="380703"/>
    <lineage>
        <taxon>Bacteria</taxon>
        <taxon>Pseudomonadati</taxon>
        <taxon>Pseudomonadota</taxon>
        <taxon>Gammaproteobacteria</taxon>
        <taxon>Aeromonadales</taxon>
        <taxon>Aeromonadaceae</taxon>
        <taxon>Aeromonas</taxon>
    </lineage>
</organism>
<gene>
    <name type="ordered locus">AHA_2872</name>
</gene>